<name>RNPA_ECO24</name>
<feature type="chain" id="PRO_1000058750" description="Ribonuclease P protein component">
    <location>
        <begin position="1"/>
        <end position="119"/>
    </location>
</feature>
<proteinExistence type="inferred from homology"/>
<sequence length="119" mass="13789">MVKLAFPRELRLLTPSQFTFVFQQPQRAGTPQITILGRLNSLGHPRIGLTVAKKNVRRAHERNRIKRLTRESFRLRQHELPAMDFVVVAKKGVADLDNRALSEALEKLWRRHCRLARGS</sequence>
<protein>
    <recommendedName>
        <fullName evidence="1">Ribonuclease P protein component</fullName>
        <shortName evidence="1">RNase P protein</shortName>
        <shortName evidence="1">RNaseP protein</shortName>
        <ecNumber evidence="1">3.1.26.5</ecNumber>
    </recommendedName>
    <alternativeName>
        <fullName evidence="1">Protein C5</fullName>
    </alternativeName>
</protein>
<comment type="function">
    <text evidence="1">RNaseP catalyzes the removal of the 5'-leader sequence from pre-tRNA to produce the mature 5'-terminus. It can also cleave other RNA substrates such as 4.5S RNA. The protein component plays an auxiliary but essential role in vivo by binding to the 5'-leader sequence and broadening the substrate specificity of the ribozyme.</text>
</comment>
<comment type="catalytic activity">
    <reaction evidence="1">
        <text>Endonucleolytic cleavage of RNA, removing 5'-extranucleotides from tRNA precursor.</text>
        <dbReference type="EC" id="3.1.26.5"/>
    </reaction>
</comment>
<comment type="subunit">
    <text evidence="1">Consists of a catalytic RNA component (M1 or rnpB) and a protein subunit.</text>
</comment>
<comment type="similarity">
    <text evidence="1">Belongs to the RnpA family.</text>
</comment>
<reference key="1">
    <citation type="journal article" date="2008" name="J. Bacteriol.">
        <title>The pangenome structure of Escherichia coli: comparative genomic analysis of E. coli commensal and pathogenic isolates.</title>
        <authorList>
            <person name="Rasko D.A."/>
            <person name="Rosovitz M.J."/>
            <person name="Myers G.S.A."/>
            <person name="Mongodin E.F."/>
            <person name="Fricke W.F."/>
            <person name="Gajer P."/>
            <person name="Crabtree J."/>
            <person name="Sebaihia M."/>
            <person name="Thomson N.R."/>
            <person name="Chaudhuri R."/>
            <person name="Henderson I.R."/>
            <person name="Sperandio V."/>
            <person name="Ravel J."/>
        </authorList>
    </citation>
    <scope>NUCLEOTIDE SEQUENCE [LARGE SCALE GENOMIC DNA]</scope>
    <source>
        <strain>E24377A / ETEC</strain>
    </source>
</reference>
<evidence type="ECO:0000255" key="1">
    <source>
        <dbReference type="HAMAP-Rule" id="MF_00227"/>
    </source>
</evidence>
<keyword id="KW-0255">Endonuclease</keyword>
<keyword id="KW-0378">Hydrolase</keyword>
<keyword id="KW-0540">Nuclease</keyword>
<keyword id="KW-1185">Reference proteome</keyword>
<keyword id="KW-0694">RNA-binding</keyword>
<keyword id="KW-0819">tRNA processing</keyword>
<gene>
    <name evidence="1" type="primary">rnpA</name>
    <name type="ordered locus">EcE24377A_4214</name>
</gene>
<dbReference type="EC" id="3.1.26.5" evidence="1"/>
<dbReference type="EMBL" id="CP000800">
    <property type="protein sequence ID" value="ABV18300.1"/>
    <property type="molecule type" value="Genomic_DNA"/>
</dbReference>
<dbReference type="RefSeq" id="WP_000239730.1">
    <property type="nucleotide sequence ID" value="NC_009801.1"/>
</dbReference>
<dbReference type="BMRB" id="A7ZTR0"/>
<dbReference type="SMR" id="A7ZTR0"/>
<dbReference type="GeneID" id="93778446"/>
<dbReference type="KEGG" id="ecw:EcE24377A_4214"/>
<dbReference type="HOGENOM" id="CLU_117179_11_0_6"/>
<dbReference type="Proteomes" id="UP000001122">
    <property type="component" value="Chromosome"/>
</dbReference>
<dbReference type="GO" id="GO:0030677">
    <property type="term" value="C:ribonuclease P complex"/>
    <property type="evidence" value="ECO:0007669"/>
    <property type="project" value="TreeGrafter"/>
</dbReference>
<dbReference type="GO" id="GO:0042781">
    <property type="term" value="F:3'-tRNA processing endoribonuclease activity"/>
    <property type="evidence" value="ECO:0007669"/>
    <property type="project" value="TreeGrafter"/>
</dbReference>
<dbReference type="GO" id="GO:0004526">
    <property type="term" value="F:ribonuclease P activity"/>
    <property type="evidence" value="ECO:0007669"/>
    <property type="project" value="UniProtKB-UniRule"/>
</dbReference>
<dbReference type="GO" id="GO:0000049">
    <property type="term" value="F:tRNA binding"/>
    <property type="evidence" value="ECO:0007669"/>
    <property type="project" value="UniProtKB-UniRule"/>
</dbReference>
<dbReference type="GO" id="GO:0001682">
    <property type="term" value="P:tRNA 5'-leader removal"/>
    <property type="evidence" value="ECO:0007669"/>
    <property type="project" value="UniProtKB-UniRule"/>
</dbReference>
<dbReference type="FunFam" id="3.30.230.10:FF:000016">
    <property type="entry name" value="Ribonuclease P protein component"/>
    <property type="match status" value="1"/>
</dbReference>
<dbReference type="Gene3D" id="3.30.230.10">
    <property type="match status" value="1"/>
</dbReference>
<dbReference type="HAMAP" id="MF_00227">
    <property type="entry name" value="RNase_P"/>
    <property type="match status" value="1"/>
</dbReference>
<dbReference type="InterPro" id="IPR020568">
    <property type="entry name" value="Ribosomal_Su5_D2-typ_SF"/>
</dbReference>
<dbReference type="InterPro" id="IPR014721">
    <property type="entry name" value="Ribsml_uS5_D2-typ_fold_subgr"/>
</dbReference>
<dbReference type="InterPro" id="IPR000100">
    <property type="entry name" value="RNase_P"/>
</dbReference>
<dbReference type="InterPro" id="IPR020539">
    <property type="entry name" value="RNase_P_CS"/>
</dbReference>
<dbReference type="NCBIfam" id="TIGR00188">
    <property type="entry name" value="rnpA"/>
    <property type="match status" value="1"/>
</dbReference>
<dbReference type="PANTHER" id="PTHR33992">
    <property type="entry name" value="RIBONUCLEASE P PROTEIN COMPONENT"/>
    <property type="match status" value="1"/>
</dbReference>
<dbReference type="PANTHER" id="PTHR33992:SF1">
    <property type="entry name" value="RIBONUCLEASE P PROTEIN COMPONENT"/>
    <property type="match status" value="1"/>
</dbReference>
<dbReference type="Pfam" id="PF00825">
    <property type="entry name" value="Ribonuclease_P"/>
    <property type="match status" value="1"/>
</dbReference>
<dbReference type="SUPFAM" id="SSF54211">
    <property type="entry name" value="Ribosomal protein S5 domain 2-like"/>
    <property type="match status" value="1"/>
</dbReference>
<dbReference type="PROSITE" id="PS00648">
    <property type="entry name" value="RIBONUCLEASE_P"/>
    <property type="match status" value="1"/>
</dbReference>
<organism>
    <name type="scientific">Escherichia coli O139:H28 (strain E24377A / ETEC)</name>
    <dbReference type="NCBI Taxonomy" id="331111"/>
    <lineage>
        <taxon>Bacteria</taxon>
        <taxon>Pseudomonadati</taxon>
        <taxon>Pseudomonadota</taxon>
        <taxon>Gammaproteobacteria</taxon>
        <taxon>Enterobacterales</taxon>
        <taxon>Enterobacteriaceae</taxon>
        <taxon>Escherichia</taxon>
    </lineage>
</organism>
<accession>A7ZTR0</accession>